<protein>
    <recommendedName>
        <fullName evidence="1">Small ribosomal subunit protein uS13</fullName>
    </recommendedName>
    <alternativeName>
        <fullName evidence="3">30S ribosomal protein S13</fullName>
    </alternativeName>
</protein>
<accession>Q1IX96</accession>
<keyword id="KW-0687">Ribonucleoprotein</keyword>
<keyword id="KW-0689">Ribosomal protein</keyword>
<keyword id="KW-0694">RNA-binding</keyword>
<keyword id="KW-0699">rRNA-binding</keyword>
<keyword id="KW-0820">tRNA-binding</keyword>
<comment type="function">
    <text evidence="1">Located at the top of the head of the 30S subunit, it contacts several helices of the 16S rRNA. In the 70S ribosome it contacts the 23S rRNA (bridge B1a) and protein L5 of the 50S subunit (bridge B1b), connecting the 2 subunits; these bridges are implicated in subunit movement. Contacts the tRNAs in the A and P-sites.</text>
</comment>
<comment type="subunit">
    <text evidence="1">Part of the 30S ribosomal subunit. Forms a loose heterodimer with protein S19. Forms two bridges to the 50S subunit in the 70S ribosome.</text>
</comment>
<comment type="similarity">
    <text evidence="1">Belongs to the universal ribosomal protein uS13 family.</text>
</comment>
<dbReference type="EMBL" id="CP000359">
    <property type="protein sequence ID" value="ABF46138.1"/>
    <property type="molecule type" value="Genomic_DNA"/>
</dbReference>
<dbReference type="RefSeq" id="WP_011530968.1">
    <property type="nucleotide sequence ID" value="NC_008025.1"/>
</dbReference>
<dbReference type="SMR" id="Q1IX96"/>
<dbReference type="STRING" id="319795.Dgeo_1843"/>
<dbReference type="KEGG" id="dge:Dgeo_1843"/>
<dbReference type="eggNOG" id="COG0099">
    <property type="taxonomic scope" value="Bacteria"/>
</dbReference>
<dbReference type="HOGENOM" id="CLU_103849_1_2_0"/>
<dbReference type="Proteomes" id="UP000002431">
    <property type="component" value="Chromosome"/>
</dbReference>
<dbReference type="GO" id="GO:0005829">
    <property type="term" value="C:cytosol"/>
    <property type="evidence" value="ECO:0007669"/>
    <property type="project" value="TreeGrafter"/>
</dbReference>
<dbReference type="GO" id="GO:0015935">
    <property type="term" value="C:small ribosomal subunit"/>
    <property type="evidence" value="ECO:0007669"/>
    <property type="project" value="TreeGrafter"/>
</dbReference>
<dbReference type="GO" id="GO:0019843">
    <property type="term" value="F:rRNA binding"/>
    <property type="evidence" value="ECO:0007669"/>
    <property type="project" value="UniProtKB-UniRule"/>
</dbReference>
<dbReference type="GO" id="GO:0003735">
    <property type="term" value="F:structural constituent of ribosome"/>
    <property type="evidence" value="ECO:0007669"/>
    <property type="project" value="InterPro"/>
</dbReference>
<dbReference type="GO" id="GO:0000049">
    <property type="term" value="F:tRNA binding"/>
    <property type="evidence" value="ECO:0007669"/>
    <property type="project" value="UniProtKB-UniRule"/>
</dbReference>
<dbReference type="GO" id="GO:0006412">
    <property type="term" value="P:translation"/>
    <property type="evidence" value="ECO:0007669"/>
    <property type="project" value="UniProtKB-UniRule"/>
</dbReference>
<dbReference type="FunFam" id="1.10.8.50:FF:000001">
    <property type="entry name" value="30S ribosomal protein S13"/>
    <property type="match status" value="1"/>
</dbReference>
<dbReference type="FunFam" id="4.10.910.10:FF:000001">
    <property type="entry name" value="30S ribosomal protein S13"/>
    <property type="match status" value="1"/>
</dbReference>
<dbReference type="Gene3D" id="1.10.8.50">
    <property type="match status" value="1"/>
</dbReference>
<dbReference type="Gene3D" id="4.10.910.10">
    <property type="entry name" value="30s ribosomal protein s13, domain 2"/>
    <property type="match status" value="1"/>
</dbReference>
<dbReference type="HAMAP" id="MF_01315">
    <property type="entry name" value="Ribosomal_uS13"/>
    <property type="match status" value="1"/>
</dbReference>
<dbReference type="InterPro" id="IPR027437">
    <property type="entry name" value="Rbsml_uS13_C"/>
</dbReference>
<dbReference type="InterPro" id="IPR001892">
    <property type="entry name" value="Ribosomal_uS13"/>
</dbReference>
<dbReference type="InterPro" id="IPR010979">
    <property type="entry name" value="Ribosomal_uS13-like_H2TH"/>
</dbReference>
<dbReference type="InterPro" id="IPR019980">
    <property type="entry name" value="Ribosomal_uS13_bac-type"/>
</dbReference>
<dbReference type="InterPro" id="IPR018269">
    <property type="entry name" value="Ribosomal_uS13_CS"/>
</dbReference>
<dbReference type="NCBIfam" id="TIGR03631">
    <property type="entry name" value="uS13_bact"/>
    <property type="match status" value="1"/>
</dbReference>
<dbReference type="PANTHER" id="PTHR10871">
    <property type="entry name" value="30S RIBOSOMAL PROTEIN S13/40S RIBOSOMAL PROTEIN S18"/>
    <property type="match status" value="1"/>
</dbReference>
<dbReference type="PANTHER" id="PTHR10871:SF1">
    <property type="entry name" value="SMALL RIBOSOMAL SUBUNIT PROTEIN US13M"/>
    <property type="match status" value="1"/>
</dbReference>
<dbReference type="Pfam" id="PF00416">
    <property type="entry name" value="Ribosomal_S13"/>
    <property type="match status" value="1"/>
</dbReference>
<dbReference type="PIRSF" id="PIRSF002134">
    <property type="entry name" value="Ribosomal_S13"/>
    <property type="match status" value="1"/>
</dbReference>
<dbReference type="SUPFAM" id="SSF46946">
    <property type="entry name" value="S13-like H2TH domain"/>
    <property type="match status" value="1"/>
</dbReference>
<dbReference type="PROSITE" id="PS00646">
    <property type="entry name" value="RIBOSOMAL_S13_1"/>
    <property type="match status" value="1"/>
</dbReference>
<dbReference type="PROSITE" id="PS50159">
    <property type="entry name" value="RIBOSOMAL_S13_2"/>
    <property type="match status" value="1"/>
</dbReference>
<organism>
    <name type="scientific">Deinococcus geothermalis (strain DSM 11300 / CIP 105573 / AG-3a)</name>
    <dbReference type="NCBI Taxonomy" id="319795"/>
    <lineage>
        <taxon>Bacteria</taxon>
        <taxon>Thermotogati</taxon>
        <taxon>Deinococcota</taxon>
        <taxon>Deinococci</taxon>
        <taxon>Deinococcales</taxon>
        <taxon>Deinococcaceae</taxon>
        <taxon>Deinococcus</taxon>
    </lineage>
</organism>
<proteinExistence type="inferred from homology"/>
<sequence>MARIAGVDLPREKRVEIALTYIYGIGLTRAKEVLARTGVNPDTRVKNLSETEQSALREAIEKTYKVEGDLRSEVGQNIKRLMDIGAYRGLRHRRGLPVRGQRTKTNARTRKGPRKTVAGKKKATRK</sequence>
<reference key="1">
    <citation type="submission" date="2006-04" db="EMBL/GenBank/DDBJ databases">
        <title>Complete sequence of chromosome of Deinococcus geothermalis DSM 11300.</title>
        <authorList>
            <person name="Copeland A."/>
            <person name="Lucas S."/>
            <person name="Lapidus A."/>
            <person name="Barry K."/>
            <person name="Detter J.C."/>
            <person name="Glavina del Rio T."/>
            <person name="Hammon N."/>
            <person name="Israni S."/>
            <person name="Dalin E."/>
            <person name="Tice H."/>
            <person name="Pitluck S."/>
            <person name="Brettin T."/>
            <person name="Bruce D."/>
            <person name="Han C."/>
            <person name="Tapia R."/>
            <person name="Saunders E."/>
            <person name="Gilna P."/>
            <person name="Schmutz J."/>
            <person name="Larimer F."/>
            <person name="Land M."/>
            <person name="Hauser L."/>
            <person name="Kyrpides N."/>
            <person name="Kim E."/>
            <person name="Daly M.J."/>
            <person name="Fredrickson J.K."/>
            <person name="Makarova K.S."/>
            <person name="Gaidamakova E.K."/>
            <person name="Zhai M."/>
            <person name="Richardson P."/>
        </authorList>
    </citation>
    <scope>NUCLEOTIDE SEQUENCE [LARGE SCALE GENOMIC DNA]</scope>
    <source>
        <strain>DSM 11300 / CIP 105573 / AG-3a</strain>
    </source>
</reference>
<name>RS13_DEIGD</name>
<evidence type="ECO:0000255" key="1">
    <source>
        <dbReference type="HAMAP-Rule" id="MF_01315"/>
    </source>
</evidence>
<evidence type="ECO:0000256" key="2">
    <source>
        <dbReference type="SAM" id="MobiDB-lite"/>
    </source>
</evidence>
<evidence type="ECO:0000305" key="3"/>
<gene>
    <name evidence="1" type="primary">rpsM</name>
    <name type="ordered locus">Dgeo_1843</name>
</gene>
<feature type="chain" id="PRO_0000306594" description="Small ribosomal subunit protein uS13">
    <location>
        <begin position="1"/>
        <end position="126"/>
    </location>
</feature>
<feature type="region of interest" description="Disordered" evidence="2">
    <location>
        <begin position="92"/>
        <end position="126"/>
    </location>
</feature>